<comment type="function">
    <text evidence="1">Cell wall formation. Adds enolpyruvyl to UDP-N-acetylglucosamine.</text>
</comment>
<comment type="catalytic activity">
    <reaction evidence="1">
        <text>phosphoenolpyruvate + UDP-N-acetyl-alpha-D-glucosamine = UDP-N-acetyl-3-O-(1-carboxyvinyl)-alpha-D-glucosamine + phosphate</text>
        <dbReference type="Rhea" id="RHEA:18681"/>
        <dbReference type="ChEBI" id="CHEBI:43474"/>
        <dbReference type="ChEBI" id="CHEBI:57705"/>
        <dbReference type="ChEBI" id="CHEBI:58702"/>
        <dbReference type="ChEBI" id="CHEBI:68483"/>
        <dbReference type="EC" id="2.5.1.7"/>
    </reaction>
</comment>
<comment type="pathway">
    <text evidence="1">Cell wall biogenesis; peptidoglycan biosynthesis.</text>
</comment>
<comment type="subcellular location">
    <subcellularLocation>
        <location evidence="1">Cytoplasm</location>
    </subcellularLocation>
</comment>
<comment type="similarity">
    <text evidence="1">Belongs to the EPSP synthase family. MurA subfamily.</text>
</comment>
<gene>
    <name evidence="1" type="primary">murA</name>
    <name type="ordered locus">VFMJ11_0391</name>
</gene>
<protein>
    <recommendedName>
        <fullName evidence="1">UDP-N-acetylglucosamine 1-carboxyvinyltransferase</fullName>
        <ecNumber evidence="1">2.5.1.7</ecNumber>
    </recommendedName>
    <alternativeName>
        <fullName evidence="1">Enoylpyruvate transferase</fullName>
    </alternativeName>
    <alternativeName>
        <fullName evidence="1">UDP-N-acetylglucosamine enolpyruvyl transferase</fullName>
        <shortName evidence="1">EPT</shortName>
    </alternativeName>
</protein>
<name>MURA_ALIFM</name>
<organism>
    <name type="scientific">Aliivibrio fischeri (strain MJ11)</name>
    <name type="common">Vibrio fischeri</name>
    <dbReference type="NCBI Taxonomy" id="388396"/>
    <lineage>
        <taxon>Bacteria</taxon>
        <taxon>Pseudomonadati</taxon>
        <taxon>Pseudomonadota</taxon>
        <taxon>Gammaproteobacteria</taxon>
        <taxon>Vibrionales</taxon>
        <taxon>Vibrionaceae</taxon>
        <taxon>Aliivibrio</taxon>
    </lineage>
</organism>
<keyword id="KW-0002">3D-structure</keyword>
<keyword id="KW-0131">Cell cycle</keyword>
<keyword id="KW-0132">Cell division</keyword>
<keyword id="KW-0133">Cell shape</keyword>
<keyword id="KW-0961">Cell wall biogenesis/degradation</keyword>
<keyword id="KW-0963">Cytoplasm</keyword>
<keyword id="KW-0573">Peptidoglycan synthesis</keyword>
<keyword id="KW-0670">Pyruvate</keyword>
<keyword id="KW-0808">Transferase</keyword>
<sequence length="422" mass="44726">MYKFRIQGSDKPLSGEVTISGAKNAALPILFASLLAEEPVEVANVPKLRDVDTTMELLKRLGAEVSRNGSVHIDASGVNDFCAPYDLVKTMRASIWALGPLVARFGKGQVSLPGGCAIGARPVDLHIHGLEQLGATIKLEEGYVKAEVDGRLKGAHIVMDKVSVGATITVMCAATLAEGTTVLENAAREPEIVDTANFLNAIGAKVSGMGTDTITIEGVERLGGGYHEVVADRIETGTFLVAAAVSGGKIVCKNTKAHLLEAVLAKLEEAGADVQTGDDWISLDMTGRELKAVNIRTAPHPAFPTDMQAQFTLLNMMAKGSGIITETIFENRFMHIPELQRMGAHAEIEGNTAICGDTDGLSGAQVMATDLRASASLVIAGCIAKGETIVDRIYHIDRGYDKIEDKLTALGANIERVHSDDL</sequence>
<proteinExistence type="evidence at protein level"/>
<evidence type="ECO:0000255" key="1">
    <source>
        <dbReference type="HAMAP-Rule" id="MF_00111"/>
    </source>
</evidence>
<evidence type="ECO:0000269" key="2">
    <source>
    </source>
</evidence>
<evidence type="ECO:0000303" key="3">
    <source>
    </source>
</evidence>
<evidence type="ECO:0000305" key="4">
    <source>
    </source>
</evidence>
<evidence type="ECO:0007744" key="5">
    <source>
        <dbReference type="PDB" id="3VCY"/>
    </source>
</evidence>
<evidence type="ECO:0007829" key="6">
    <source>
        <dbReference type="PDB" id="3VCY"/>
    </source>
</evidence>
<dbReference type="EC" id="2.5.1.7" evidence="1"/>
<dbReference type="EMBL" id="CP001139">
    <property type="protein sequence ID" value="ACH66965.1"/>
    <property type="molecule type" value="Genomic_DNA"/>
</dbReference>
<dbReference type="RefSeq" id="WP_005417511.1">
    <property type="nucleotide sequence ID" value="NC_011184.1"/>
</dbReference>
<dbReference type="PDB" id="3VCY">
    <property type="method" value="X-ray"/>
    <property type="resolution" value="1.92 A"/>
    <property type="chains" value="A/B/C/D=1-422"/>
</dbReference>
<dbReference type="PDBsum" id="3VCY"/>
<dbReference type="SMR" id="B5F9P4"/>
<dbReference type="KEGG" id="vfm:VFMJ11_0391"/>
<dbReference type="HOGENOM" id="CLU_027387_0_0_6"/>
<dbReference type="BRENDA" id="2.5.1.7">
    <property type="organism ID" value="71"/>
</dbReference>
<dbReference type="UniPathway" id="UPA00219"/>
<dbReference type="EvolutionaryTrace" id="B5F9P4"/>
<dbReference type="Proteomes" id="UP000001857">
    <property type="component" value="Chromosome I"/>
</dbReference>
<dbReference type="GO" id="GO:0005737">
    <property type="term" value="C:cytoplasm"/>
    <property type="evidence" value="ECO:0007669"/>
    <property type="project" value="UniProtKB-SubCell"/>
</dbReference>
<dbReference type="GO" id="GO:0008760">
    <property type="term" value="F:UDP-N-acetylglucosamine 1-carboxyvinyltransferase activity"/>
    <property type="evidence" value="ECO:0007669"/>
    <property type="project" value="UniProtKB-UniRule"/>
</dbReference>
<dbReference type="GO" id="GO:0051301">
    <property type="term" value="P:cell division"/>
    <property type="evidence" value="ECO:0007669"/>
    <property type="project" value="UniProtKB-KW"/>
</dbReference>
<dbReference type="GO" id="GO:0071555">
    <property type="term" value="P:cell wall organization"/>
    <property type="evidence" value="ECO:0007669"/>
    <property type="project" value="UniProtKB-KW"/>
</dbReference>
<dbReference type="GO" id="GO:0009252">
    <property type="term" value="P:peptidoglycan biosynthetic process"/>
    <property type="evidence" value="ECO:0007669"/>
    <property type="project" value="UniProtKB-UniRule"/>
</dbReference>
<dbReference type="GO" id="GO:0008360">
    <property type="term" value="P:regulation of cell shape"/>
    <property type="evidence" value="ECO:0007669"/>
    <property type="project" value="UniProtKB-KW"/>
</dbReference>
<dbReference type="GO" id="GO:0019277">
    <property type="term" value="P:UDP-N-acetylgalactosamine biosynthetic process"/>
    <property type="evidence" value="ECO:0007669"/>
    <property type="project" value="InterPro"/>
</dbReference>
<dbReference type="CDD" id="cd01555">
    <property type="entry name" value="UdpNAET"/>
    <property type="match status" value="1"/>
</dbReference>
<dbReference type="FunFam" id="3.65.10.10:FF:000001">
    <property type="entry name" value="UDP-N-acetylglucosamine 1-carboxyvinyltransferase"/>
    <property type="match status" value="1"/>
</dbReference>
<dbReference type="Gene3D" id="3.65.10.10">
    <property type="entry name" value="Enolpyruvate transferase domain"/>
    <property type="match status" value="2"/>
</dbReference>
<dbReference type="HAMAP" id="MF_00111">
    <property type="entry name" value="MurA"/>
    <property type="match status" value="1"/>
</dbReference>
<dbReference type="InterPro" id="IPR001986">
    <property type="entry name" value="Enolpyruvate_Tfrase_dom"/>
</dbReference>
<dbReference type="InterPro" id="IPR036968">
    <property type="entry name" value="Enolpyruvate_Tfrase_sf"/>
</dbReference>
<dbReference type="InterPro" id="IPR050068">
    <property type="entry name" value="MurA_subfamily"/>
</dbReference>
<dbReference type="InterPro" id="IPR013792">
    <property type="entry name" value="RNA3'P_cycl/enolpyr_Trfase_a/b"/>
</dbReference>
<dbReference type="InterPro" id="IPR005750">
    <property type="entry name" value="UDP_GlcNAc_COvinyl_MurA"/>
</dbReference>
<dbReference type="NCBIfam" id="TIGR01072">
    <property type="entry name" value="murA"/>
    <property type="match status" value="1"/>
</dbReference>
<dbReference type="NCBIfam" id="NF006873">
    <property type="entry name" value="PRK09369.1"/>
    <property type="match status" value="1"/>
</dbReference>
<dbReference type="PANTHER" id="PTHR43783">
    <property type="entry name" value="UDP-N-ACETYLGLUCOSAMINE 1-CARBOXYVINYLTRANSFERASE"/>
    <property type="match status" value="1"/>
</dbReference>
<dbReference type="PANTHER" id="PTHR43783:SF1">
    <property type="entry name" value="UDP-N-ACETYLGLUCOSAMINE 1-CARBOXYVINYLTRANSFERASE"/>
    <property type="match status" value="1"/>
</dbReference>
<dbReference type="Pfam" id="PF00275">
    <property type="entry name" value="EPSP_synthase"/>
    <property type="match status" value="1"/>
</dbReference>
<dbReference type="SUPFAM" id="SSF55205">
    <property type="entry name" value="EPT/RTPC-like"/>
    <property type="match status" value="1"/>
</dbReference>
<feature type="chain" id="PRO_1000094731" description="UDP-N-acetylglucosamine 1-carboxyvinyltransferase">
    <location>
        <begin position="1"/>
        <end position="422"/>
    </location>
</feature>
<feature type="active site" description="Proton donor" evidence="1">
    <location>
        <position position="116"/>
    </location>
</feature>
<feature type="binding site" evidence="4 5">
    <location>
        <begin position="23"/>
        <end position="24"/>
    </location>
    <ligand>
        <name>phosphoenolpyruvate</name>
        <dbReference type="ChEBI" id="CHEBI:58702"/>
    </ligand>
</feature>
<feature type="binding site" evidence="1">
    <location>
        <position position="92"/>
    </location>
    <ligand>
        <name>UDP-N-acetyl-alpha-D-glucosamine</name>
        <dbReference type="ChEBI" id="CHEBI:57705"/>
    </ligand>
</feature>
<feature type="binding site" evidence="2 5">
    <location>
        <begin position="121"/>
        <end position="125"/>
    </location>
    <ligand>
        <name>UDP-N-acetyl-alpha-D-glucosamine</name>
        <dbReference type="ChEBI" id="CHEBI:57705"/>
    </ligand>
</feature>
<feature type="binding site" evidence="4 5">
    <location>
        <begin position="161"/>
        <end position="165"/>
    </location>
    <ligand>
        <name>UDP-N-acetyl-alpha-D-glucosamine</name>
        <dbReference type="ChEBI" id="CHEBI:57705"/>
    </ligand>
</feature>
<feature type="binding site" evidence="2 5">
    <location>
        <position position="306"/>
    </location>
    <ligand>
        <name>UDP-N-acetyl-alpha-D-glucosamine</name>
        <dbReference type="ChEBI" id="CHEBI:57705"/>
    </ligand>
</feature>
<feature type="binding site" evidence="2 5">
    <location>
        <position position="328"/>
    </location>
    <ligand>
        <name>UDP-N-acetyl-alpha-D-glucosamine</name>
        <dbReference type="ChEBI" id="CHEBI:57705"/>
    </ligand>
</feature>
<feature type="modified residue" description="2-(S-cysteinyl)pyruvic acid O-phosphothioketal" evidence="1">
    <location>
        <position position="116"/>
    </location>
</feature>
<feature type="strand" evidence="6">
    <location>
        <begin position="3"/>
        <end position="7"/>
    </location>
</feature>
<feature type="strand" evidence="6">
    <location>
        <begin position="15"/>
        <end position="18"/>
    </location>
</feature>
<feature type="helix" evidence="6">
    <location>
        <begin position="23"/>
        <end position="32"/>
    </location>
</feature>
<feature type="helix" evidence="6">
    <location>
        <begin position="33"/>
        <end position="35"/>
    </location>
</feature>
<feature type="strand" evidence="6">
    <location>
        <begin position="36"/>
        <end position="38"/>
    </location>
</feature>
<feature type="strand" evidence="6">
    <location>
        <begin position="40"/>
        <end position="44"/>
    </location>
</feature>
<feature type="helix" evidence="6">
    <location>
        <begin position="49"/>
        <end position="61"/>
    </location>
</feature>
<feature type="strand" evidence="6">
    <location>
        <begin position="64"/>
        <end position="74"/>
    </location>
</feature>
<feature type="helix" evidence="6">
    <location>
        <begin position="85"/>
        <end position="90"/>
    </location>
</feature>
<feature type="helix" evidence="6">
    <location>
        <begin position="92"/>
        <end position="97"/>
    </location>
</feature>
<feature type="helix" evidence="6">
    <location>
        <begin position="98"/>
        <end position="105"/>
    </location>
</feature>
<feature type="strand" evidence="6">
    <location>
        <begin position="106"/>
        <end position="111"/>
    </location>
</feature>
<feature type="helix" evidence="6">
    <location>
        <begin position="124"/>
        <end position="132"/>
    </location>
</feature>
<feature type="strand" evidence="6">
    <location>
        <begin position="136"/>
        <end position="140"/>
    </location>
</feature>
<feature type="strand" evidence="6">
    <location>
        <begin position="143"/>
        <end position="147"/>
    </location>
</feature>
<feature type="strand" evidence="6">
    <location>
        <begin position="156"/>
        <end position="158"/>
    </location>
</feature>
<feature type="helix" evidence="6">
    <location>
        <begin position="164"/>
        <end position="174"/>
    </location>
</feature>
<feature type="strand" evidence="6">
    <location>
        <begin position="177"/>
        <end position="185"/>
    </location>
</feature>
<feature type="helix" evidence="6">
    <location>
        <begin position="190"/>
        <end position="201"/>
    </location>
</feature>
<feature type="strand" evidence="6">
    <location>
        <begin position="211"/>
        <end position="217"/>
    </location>
</feature>
<feature type="strand" evidence="6">
    <location>
        <begin position="225"/>
        <end position="228"/>
    </location>
</feature>
<feature type="helix" evidence="6">
    <location>
        <begin position="233"/>
        <end position="246"/>
    </location>
</feature>
<feature type="strand" evidence="6">
    <location>
        <begin position="249"/>
        <end position="254"/>
    </location>
</feature>
<feature type="helix" evidence="6">
    <location>
        <begin position="257"/>
        <end position="259"/>
    </location>
</feature>
<feature type="helix" evidence="6">
    <location>
        <begin position="261"/>
        <end position="269"/>
    </location>
</feature>
<feature type="strand" evidence="6">
    <location>
        <begin position="273"/>
        <end position="276"/>
    </location>
</feature>
<feature type="strand" evidence="6">
    <location>
        <begin position="278"/>
        <end position="284"/>
    </location>
</feature>
<feature type="helix" evidence="6">
    <location>
        <begin position="305"/>
        <end position="307"/>
    </location>
</feature>
<feature type="helix" evidence="6">
    <location>
        <begin position="308"/>
        <end position="317"/>
    </location>
</feature>
<feature type="strand" evidence="6">
    <location>
        <begin position="318"/>
        <end position="320"/>
    </location>
</feature>
<feature type="strand" evidence="6">
    <location>
        <begin position="322"/>
        <end position="325"/>
    </location>
</feature>
<feature type="strand" evidence="6">
    <location>
        <begin position="327"/>
        <end position="329"/>
    </location>
</feature>
<feature type="helix" evidence="6">
    <location>
        <begin position="335"/>
        <end position="341"/>
    </location>
</feature>
<feature type="strand" evidence="6">
    <location>
        <begin position="346"/>
        <end position="349"/>
    </location>
</feature>
<feature type="strand" evidence="6">
    <location>
        <begin position="352"/>
        <end position="355"/>
    </location>
</feature>
<feature type="strand" evidence="6">
    <location>
        <begin position="365"/>
        <end position="367"/>
    </location>
</feature>
<feature type="helix" evidence="6">
    <location>
        <begin position="371"/>
        <end position="383"/>
    </location>
</feature>
<feature type="strand" evidence="6">
    <location>
        <begin position="384"/>
        <end position="391"/>
    </location>
</feature>
<feature type="helix" evidence="6">
    <location>
        <begin position="394"/>
        <end position="399"/>
    </location>
</feature>
<feature type="strand" evidence="6">
    <location>
        <begin position="400"/>
        <end position="402"/>
    </location>
</feature>
<feature type="helix" evidence="6">
    <location>
        <begin position="403"/>
        <end position="408"/>
    </location>
</feature>
<feature type="turn" evidence="6">
    <location>
        <begin position="409"/>
        <end position="411"/>
    </location>
</feature>
<feature type="strand" evidence="6">
    <location>
        <begin position="413"/>
        <end position="417"/>
    </location>
</feature>
<reference key="1">
    <citation type="submission" date="2008-08" db="EMBL/GenBank/DDBJ databases">
        <title>Complete sequence of Vibrio fischeri strain MJ11.</title>
        <authorList>
            <person name="Mandel M.J."/>
            <person name="Stabb E.V."/>
            <person name="Ruby E.G."/>
            <person name="Ferriera S."/>
            <person name="Johnson J."/>
            <person name="Kravitz S."/>
            <person name="Beeson K."/>
            <person name="Sutton G."/>
            <person name="Rogers Y.-H."/>
            <person name="Friedman R."/>
            <person name="Frazier M."/>
            <person name="Venter J.C."/>
        </authorList>
    </citation>
    <scope>NUCLEOTIDE SEQUENCE [LARGE SCALE GENOMIC DNA]</scope>
    <source>
        <strain>MJ11</strain>
    </source>
</reference>
<reference evidence="5" key="2">
    <citation type="journal article" date="2012" name="Acta Crystallogr. F">
        <title>Structure of MurA (UDP-N-acetylglucosamine enolpyruvyl transferase) from Vibrio fischeri in complex with substrate UDP-N-acetylglucosamine and the drug fosfomycin.</title>
        <authorList>
            <person name="Bensen D.C."/>
            <person name="Rodriguez S."/>
            <person name="Nix J."/>
            <person name="Cunningham M.L."/>
            <person name="Tari L.W."/>
        </authorList>
    </citation>
    <scope>X-RAY CRYSTALLOGRAPHY (1.93 ANGSTROMS) IN COMPLEX WITH UDP-N-ACETYLGLUCOSAMINE AND FOSFOMYCIN</scope>
    <source>
        <strain evidence="3">MJ11</strain>
    </source>
</reference>
<accession>B5F9P4</accession>